<evidence type="ECO:0000250" key="1"/>
<evidence type="ECO:0000255" key="2"/>
<evidence type="ECO:0000256" key="3">
    <source>
        <dbReference type="SAM" id="MobiDB-lite"/>
    </source>
</evidence>
<evidence type="ECO:0000305" key="4"/>
<organism>
    <name type="scientific">Brassica napus</name>
    <name type="common">Rape</name>
    <dbReference type="NCBI Taxonomy" id="3708"/>
    <lineage>
        <taxon>Eukaryota</taxon>
        <taxon>Viridiplantae</taxon>
        <taxon>Streptophyta</taxon>
        <taxon>Embryophyta</taxon>
        <taxon>Tracheophyta</taxon>
        <taxon>Spermatophyta</taxon>
        <taxon>Magnoliopsida</taxon>
        <taxon>eudicotyledons</taxon>
        <taxon>Gunneridae</taxon>
        <taxon>Pentapetalae</taxon>
        <taxon>rosids</taxon>
        <taxon>malvids</taxon>
        <taxon>Brassicales</taxon>
        <taxon>Brassicaceae</taxon>
        <taxon>Brassiceae</taxon>
        <taxon>Brassica</taxon>
    </lineage>
</organism>
<proteinExistence type="evidence at transcript level"/>
<name>LPAT2_BRANA</name>
<comment type="function">
    <text evidence="1">Converts lysophosphatidic acid (LPA) into phosphatidic acid by incorporating acyl moiety at the 2 position.</text>
</comment>
<comment type="catalytic activity">
    <reaction>
        <text>a 1-acyl-sn-glycero-3-phosphate + an acyl-CoA = a 1,2-diacyl-sn-glycero-3-phosphate + CoA</text>
        <dbReference type="Rhea" id="RHEA:19709"/>
        <dbReference type="ChEBI" id="CHEBI:57287"/>
        <dbReference type="ChEBI" id="CHEBI:57970"/>
        <dbReference type="ChEBI" id="CHEBI:58342"/>
        <dbReference type="ChEBI" id="CHEBI:58608"/>
        <dbReference type="EC" id="2.3.1.51"/>
    </reaction>
</comment>
<comment type="pathway">
    <text>Phospholipid metabolism; CDP-diacylglycerol biosynthesis; CDP-diacylglycerol from sn-glycerol 3-phosphate: step 2/3.</text>
</comment>
<comment type="subcellular location">
    <subcellularLocation>
        <location evidence="1">Endoplasmic reticulum membrane</location>
        <topology evidence="1">Multi-pass membrane protein</topology>
    </subcellularLocation>
</comment>
<comment type="domain">
    <text evidence="1">The HXXXXD motif is essential for acyltransferase activity and may constitute the binding site for the phosphate moiety of the glycerol-3-phosphate.</text>
</comment>
<comment type="similarity">
    <text evidence="4">Belongs to the 1-acyl-sn-glycerol-3-phosphate acyltransferase family.</text>
</comment>
<gene>
    <name type="primary">LPAT2</name>
    <name type="synonym">LPAAT2</name>
</gene>
<keyword id="KW-0012">Acyltransferase</keyword>
<keyword id="KW-0256">Endoplasmic reticulum</keyword>
<keyword id="KW-0444">Lipid biosynthesis</keyword>
<keyword id="KW-0443">Lipid metabolism</keyword>
<keyword id="KW-0472">Membrane</keyword>
<keyword id="KW-0594">Phospholipid biosynthesis</keyword>
<keyword id="KW-1208">Phospholipid metabolism</keyword>
<keyword id="KW-0808">Transferase</keyword>
<keyword id="KW-0812">Transmembrane</keyword>
<keyword id="KW-1133">Transmembrane helix</keyword>
<feature type="chain" id="PRO_0000208180" description="1-acyl-sn-glycerol-3-phosphate acyltransferase 2">
    <location>
        <begin position="1"/>
        <end position="390"/>
    </location>
</feature>
<feature type="transmembrane region" description="Helical" evidence="2">
    <location>
        <begin position="2"/>
        <end position="22"/>
    </location>
</feature>
<feature type="transmembrane region" description="Helical" evidence="2">
    <location>
        <begin position="305"/>
        <end position="325"/>
    </location>
</feature>
<feature type="transmembrane region" description="Helical" evidence="2">
    <location>
        <begin position="333"/>
        <end position="353"/>
    </location>
</feature>
<feature type="region of interest" description="Disordered" evidence="3">
    <location>
        <begin position="358"/>
        <end position="390"/>
    </location>
</feature>
<feature type="short sequence motif" description="HXXXXD motif">
    <location>
        <begin position="91"/>
        <end position="96"/>
    </location>
</feature>
<accession>Q9XFW4</accession>
<reference key="1">
    <citation type="submission" date="1997-05" db="EMBL/GenBank/DDBJ databases">
        <title>A cDNA encoding a microsomal 1-acylglycerol-3-phosphate acyltransferase of Brassica napus L.</title>
        <authorList>
            <person name="Graefin zu Muenster A."/>
            <person name="Wolter F.P."/>
            <person name="Frentzen M."/>
        </authorList>
    </citation>
    <scope>NUCLEOTIDE SEQUENCE [MRNA]</scope>
    <source>
        <tissue>Silique</tissue>
    </source>
</reference>
<sequence length="390" mass="43771">MAMAAAVIVPLGILFFISGLVVNLLQAVCYVLVRPMSKNTYRKINRVVAETLWLELVWIVDWWAGVKIQVFADDETFNRMGKEHALVVCNHRSDIDWLVGWILAQRSGCLGSALAVMKKSSKFLPVIGWSMWFSEYLFLERNWAKDESTLQSGLQRLNDFPRPFWLALFVEGTRFTEAKLKAAQEYAASSELPVPRNVLIPRTKGFVSAVSNMRSFVPAIYDMTVAIPKTSPPPTMLRLFKGQPSVVHVHIKCHSMKDLPEPEDEIAQWCRDQFVAKDALLDKHIAADTFPGQKEQNIGRPIKSLAVVVSWACLLTLGAMKFLHWSNLFSSWKGIALSAFGLGIITLCMQILIRSSQSERSTPAKVAPAKPKDNHQSGPSSQTEVEEKQK</sequence>
<dbReference type="EC" id="2.3.1.51"/>
<dbReference type="EMBL" id="Z95637">
    <property type="protein sequence ID" value="CAB09138.1"/>
    <property type="molecule type" value="mRNA"/>
</dbReference>
<dbReference type="BRENDA" id="2.3.1.51">
    <property type="organism ID" value="944"/>
</dbReference>
<dbReference type="UniPathway" id="UPA00557">
    <property type="reaction ID" value="UER00613"/>
</dbReference>
<dbReference type="GO" id="GO:0005789">
    <property type="term" value="C:endoplasmic reticulum membrane"/>
    <property type="evidence" value="ECO:0007669"/>
    <property type="project" value="UniProtKB-SubCell"/>
</dbReference>
<dbReference type="GO" id="GO:0003841">
    <property type="term" value="F:1-acylglycerol-3-phosphate O-acyltransferase activity"/>
    <property type="evidence" value="ECO:0007669"/>
    <property type="project" value="UniProtKB-EC"/>
</dbReference>
<dbReference type="GO" id="GO:0016024">
    <property type="term" value="P:CDP-diacylglycerol biosynthetic process"/>
    <property type="evidence" value="ECO:0007669"/>
    <property type="project" value="UniProtKB-UniPathway"/>
</dbReference>
<dbReference type="CDD" id="cd07990">
    <property type="entry name" value="LPLAT_LCLAT1-like"/>
    <property type="match status" value="1"/>
</dbReference>
<dbReference type="InterPro" id="IPR032098">
    <property type="entry name" value="Acyltransf_C"/>
</dbReference>
<dbReference type="InterPro" id="IPR002123">
    <property type="entry name" value="Plipid/glycerol_acylTrfase"/>
</dbReference>
<dbReference type="PANTHER" id="PTHR10983">
    <property type="entry name" value="1-ACYLGLYCEROL-3-PHOSPHATE ACYLTRANSFERASE-RELATED"/>
    <property type="match status" value="1"/>
</dbReference>
<dbReference type="PANTHER" id="PTHR10983:SF24">
    <property type="entry name" value="1-ACYLGLYCEROL-3-PHOSPHATE O-ACYLTRANSFERASE 3, ISOFORM E-RELATED"/>
    <property type="match status" value="1"/>
</dbReference>
<dbReference type="Pfam" id="PF16076">
    <property type="entry name" value="Acyltransf_C"/>
    <property type="match status" value="1"/>
</dbReference>
<dbReference type="Pfam" id="PF01553">
    <property type="entry name" value="Acyltransferase"/>
    <property type="match status" value="1"/>
</dbReference>
<dbReference type="SMART" id="SM00563">
    <property type="entry name" value="PlsC"/>
    <property type="match status" value="1"/>
</dbReference>
<dbReference type="SUPFAM" id="SSF69593">
    <property type="entry name" value="Glycerol-3-phosphate (1)-acyltransferase"/>
    <property type="match status" value="1"/>
</dbReference>
<protein>
    <recommendedName>
        <fullName>1-acyl-sn-glycerol-3-phosphate acyltransferase 2</fullName>
        <ecNumber>2.3.1.51</ecNumber>
    </recommendedName>
    <alternativeName>
        <fullName>Lysophosphatidyl acyltransferase 2</fullName>
    </alternativeName>
</protein>